<feature type="chain" id="PRO_0000373016" description="Protein PB1-F2">
    <location>
        <begin position="1"/>
        <end position="90"/>
    </location>
</feature>
<feature type="region of interest" description="Disordered" evidence="2">
    <location>
        <begin position="1"/>
        <end position="30"/>
    </location>
</feature>
<feature type="region of interest" description="Mitochondrial targeting sequence" evidence="1">
    <location>
        <begin position="65"/>
        <end position="87"/>
    </location>
</feature>
<feature type="compositionally biased region" description="Polar residues" evidence="2">
    <location>
        <begin position="14"/>
        <end position="28"/>
    </location>
</feature>
<feature type="site" description="Low pathogenicity" evidence="1">
    <location>
        <position position="66"/>
    </location>
</feature>
<protein>
    <recommendedName>
        <fullName evidence="1">Protein PB1-F2</fullName>
    </recommendedName>
</protein>
<organism>
    <name type="scientific">Influenza A virus (strain A/USA:Iowa/1943 H1N1)</name>
    <dbReference type="NCBI Taxonomy" id="425563"/>
    <lineage>
        <taxon>Viruses</taxon>
        <taxon>Riboviria</taxon>
        <taxon>Orthornavirae</taxon>
        <taxon>Negarnaviricota</taxon>
        <taxon>Polyploviricotina</taxon>
        <taxon>Insthoviricetes</taxon>
        <taxon>Articulavirales</taxon>
        <taxon>Orthomyxoviridae</taxon>
        <taxon>Alphainfluenzavirus</taxon>
        <taxon>Alphainfluenzavirus influenzae</taxon>
        <taxon>Influenza A virus</taxon>
    </lineage>
</organism>
<accession>A4GCL7</accession>
<reference key="1">
    <citation type="submission" date="2007-03" db="EMBL/GenBank/DDBJ databases">
        <title>The NIAID influenza genome sequencing project.</title>
        <authorList>
            <person name="Ghedin E."/>
            <person name="Spiro D."/>
            <person name="Miller N."/>
            <person name="Zaborsky J."/>
            <person name="Feldblyum T."/>
            <person name="Subbu V."/>
            <person name="Shumway M."/>
            <person name="Sparenborg J."/>
            <person name="Groveman L."/>
            <person name="Halpin R."/>
            <person name="Sitz J."/>
            <person name="Koo H."/>
            <person name="Salzberg S.L."/>
            <person name="Webster R.G."/>
            <person name="Hoffmann E."/>
            <person name="Krauss S."/>
            <person name="Naeve C."/>
            <person name="Bao Y."/>
            <person name="Bolotov P."/>
            <person name="Dernovoy D."/>
            <person name="Kiryutin B."/>
            <person name="Lipman D.J."/>
            <person name="Tatusova T."/>
        </authorList>
    </citation>
    <scope>NUCLEOTIDE SEQUENCE [GENOMIC RNA]</scope>
</reference>
<reference key="2">
    <citation type="submission" date="2007-03" db="EMBL/GenBank/DDBJ databases">
        <authorList>
            <consortium name="The NIAID Influenza Genome Sequencing Consortium"/>
        </authorList>
    </citation>
    <scope>NUCLEOTIDE SEQUENCE [GENOMIC RNA]</scope>
</reference>
<keyword id="KW-0053">Apoptosis</keyword>
<keyword id="KW-1035">Host cytoplasm</keyword>
<keyword id="KW-1043">Host membrane</keyword>
<keyword id="KW-1045">Host mitochondrion</keyword>
<keyword id="KW-1046">Host mitochondrion inner membrane</keyword>
<keyword id="KW-1048">Host nucleus</keyword>
<keyword id="KW-0945">Host-virus interaction</keyword>
<keyword id="KW-1090">Inhibition of host innate immune response by virus</keyword>
<keyword id="KW-1097">Inhibition of host MAVS by virus</keyword>
<keyword id="KW-1113">Inhibition of host RLR pathway by virus</keyword>
<keyword id="KW-0472">Membrane</keyword>
<keyword id="KW-1119">Modulation of host cell apoptosis by virus</keyword>
<keyword id="KW-0899">Viral immunoevasion</keyword>
<evidence type="ECO:0000255" key="1">
    <source>
        <dbReference type="HAMAP-Rule" id="MF_04064"/>
    </source>
</evidence>
<evidence type="ECO:0000256" key="2">
    <source>
        <dbReference type="SAM" id="MobiDB-lite"/>
    </source>
</evidence>
<name>PB1F2_I43A0</name>
<gene>
    <name evidence="1" type="primary">PB1</name>
    <name type="synonym">PB1-F2</name>
</gene>
<sequence>MGQEQDTPWILSTGHISTQKGEGGQQTPKLEHHNSTRLMGHCQKTMNQVVMPKQIVYWKQWLSLRNPILVFLKTRVLRRWRLFSKHEWTN</sequence>
<organismHost>
    <name type="scientific">Aves</name>
    <dbReference type="NCBI Taxonomy" id="8782"/>
</organismHost>
<organismHost>
    <name type="scientific">Homo sapiens</name>
    <name type="common">Human</name>
    <dbReference type="NCBI Taxonomy" id="9606"/>
</organismHost>
<organismHost>
    <name type="scientific">Sus scrofa</name>
    <name type="common">Pig</name>
    <dbReference type="NCBI Taxonomy" id="9823"/>
</organismHost>
<proteinExistence type="inferred from homology"/>
<dbReference type="EMBL" id="CY020467">
    <property type="protein sequence ID" value="ABO38382.1"/>
    <property type="molecule type" value="Viral_cRNA"/>
</dbReference>
<dbReference type="BMRB" id="A4GCL7"/>
<dbReference type="SMR" id="A4GCL7"/>
<dbReference type="TCDB" id="1.A.102.1.1">
    <property type="family name" value="the influenza a viroporin pb1-f2 (pb1-f2) family"/>
</dbReference>
<dbReference type="Proteomes" id="UP000008432">
    <property type="component" value="Genome"/>
</dbReference>
<dbReference type="GO" id="GO:0044164">
    <property type="term" value="C:host cell cytosol"/>
    <property type="evidence" value="ECO:0007669"/>
    <property type="project" value="UniProtKB-SubCell"/>
</dbReference>
<dbReference type="GO" id="GO:0044192">
    <property type="term" value="C:host cell mitochondrial inner membrane"/>
    <property type="evidence" value="ECO:0007669"/>
    <property type="project" value="UniProtKB-SubCell"/>
</dbReference>
<dbReference type="GO" id="GO:0042025">
    <property type="term" value="C:host cell nucleus"/>
    <property type="evidence" value="ECO:0007669"/>
    <property type="project" value="UniProtKB-SubCell"/>
</dbReference>
<dbReference type="GO" id="GO:0016020">
    <property type="term" value="C:membrane"/>
    <property type="evidence" value="ECO:0007669"/>
    <property type="project" value="UniProtKB-UniRule"/>
</dbReference>
<dbReference type="GO" id="GO:0052150">
    <property type="term" value="P:symbiont-mediated perturbation of host apoptosis"/>
    <property type="evidence" value="ECO:0007669"/>
    <property type="project" value="UniProtKB-KW"/>
</dbReference>
<dbReference type="GO" id="GO:0039545">
    <property type="term" value="P:symbiont-mediated suppression of host cytoplasmic pattern recognition receptor signaling pathway via inhibition of MAVS activity"/>
    <property type="evidence" value="ECO:0000250"/>
    <property type="project" value="UniProtKB"/>
</dbReference>
<dbReference type="HAMAP" id="MF_04064">
    <property type="entry name" value="INFV_PB1F2"/>
    <property type="match status" value="1"/>
</dbReference>
<dbReference type="InterPro" id="IPR021045">
    <property type="entry name" value="Flu_proapoptotic_PB1-F2"/>
</dbReference>
<dbReference type="Pfam" id="PF11986">
    <property type="entry name" value="PB1-F2"/>
    <property type="match status" value="1"/>
</dbReference>
<comment type="function">
    <text evidence="1">Plays an important role in promoting lung pathology in both primary viral infection and secondary bacterial infection. Promotes alteration of mitochondrial morphology, dissipation of mitochondrial membrane potential, and cell death. Alternatively, inhibits the production of interferon in the infected cell at the level of host mitochondrial antiviral signaling MAVS. Its level of expression differs greatly depending on which cell type is infected, in a manner that is independent of the levels of expression of other viral proteins. Monocytic cells are more affected than epithelial cells. Seems to disable virus-infected monocytes or other host innate immune cells. During early stage of infection, predisposes the mitochondria to permeability transition through interaction with host SLC25A6/ANT3 and VDAC1. These proteins participate in the formation of the permeability transition pore complex (PTPC) responsible of the release of mitochondrial products that triggers apoptosis.</text>
</comment>
<comment type="subunit">
    <text evidence="1">Oligomer. Interacts with human SLC25A6/ANT3 and VDAC1. Interacts with host MAVS.</text>
</comment>
<comment type="subcellular location">
    <subcellularLocation>
        <location evidence="1">Host mitochondrion inner membrane</location>
    </subcellularLocation>
    <subcellularLocation>
        <location evidence="1">Host nucleus</location>
    </subcellularLocation>
    <subcellularLocation>
        <location evidence="1">Host cytoplasm</location>
        <location evidence="1">Host cytosol</location>
    </subcellularLocation>
    <text evidence="1">Inner mitochondrial membrane in most cells types. Otherwise is detected in the nucleus and cytosol.</text>
</comment>
<comment type="miscellaneous">
    <text>Is not encoded in all strains, and seems to be dispensable for replication.</text>
</comment>
<comment type="similarity">
    <text evidence="1">Belongs to the influenza viruses PB1-F2 family.</text>
</comment>